<protein>
    <recommendedName>
        <fullName evidence="1">Large ribosomal subunit protein uL2</fullName>
    </recommendedName>
    <alternativeName>
        <fullName evidence="3">50S ribosomal protein L2</fullName>
    </alternativeName>
</protein>
<feature type="chain" id="PRO_1000051950" description="Large ribosomal subunit protein uL2">
    <location>
        <begin position="1"/>
        <end position="274"/>
    </location>
</feature>
<feature type="region of interest" description="Disordered" evidence="2">
    <location>
        <begin position="223"/>
        <end position="274"/>
    </location>
</feature>
<keyword id="KW-1185">Reference proteome</keyword>
<keyword id="KW-0687">Ribonucleoprotein</keyword>
<keyword id="KW-0689">Ribosomal protein</keyword>
<keyword id="KW-0694">RNA-binding</keyword>
<keyword id="KW-0699">rRNA-binding</keyword>
<comment type="function">
    <text evidence="1">One of the primary rRNA binding proteins. Required for association of the 30S and 50S subunits to form the 70S ribosome, for tRNA binding and peptide bond formation. It has been suggested to have peptidyltransferase activity; this is somewhat controversial. Makes several contacts with the 16S rRNA in the 70S ribosome.</text>
</comment>
<comment type="subunit">
    <text evidence="1">Part of the 50S ribosomal subunit. Forms a bridge to the 30S subunit in the 70S ribosome.</text>
</comment>
<comment type="similarity">
    <text evidence="1">Belongs to the universal ribosomal protein uL2 family.</text>
</comment>
<gene>
    <name evidence="1" type="primary">rplB</name>
    <name type="ordered locus">Sbal_4167</name>
</gene>
<organism>
    <name type="scientific">Shewanella baltica (strain OS155 / ATCC BAA-1091)</name>
    <dbReference type="NCBI Taxonomy" id="325240"/>
    <lineage>
        <taxon>Bacteria</taxon>
        <taxon>Pseudomonadati</taxon>
        <taxon>Pseudomonadota</taxon>
        <taxon>Gammaproteobacteria</taxon>
        <taxon>Alteromonadales</taxon>
        <taxon>Shewanellaceae</taxon>
        <taxon>Shewanella</taxon>
    </lineage>
</organism>
<evidence type="ECO:0000255" key="1">
    <source>
        <dbReference type="HAMAP-Rule" id="MF_01320"/>
    </source>
</evidence>
<evidence type="ECO:0000256" key="2">
    <source>
        <dbReference type="SAM" id="MobiDB-lite"/>
    </source>
</evidence>
<evidence type="ECO:0000305" key="3"/>
<reference key="1">
    <citation type="submission" date="2007-02" db="EMBL/GenBank/DDBJ databases">
        <title>Complete sequence of chromosome of Shewanella baltica OS155.</title>
        <authorList>
            <consortium name="US DOE Joint Genome Institute"/>
            <person name="Copeland A."/>
            <person name="Lucas S."/>
            <person name="Lapidus A."/>
            <person name="Barry K."/>
            <person name="Detter J.C."/>
            <person name="Glavina del Rio T."/>
            <person name="Hammon N."/>
            <person name="Israni S."/>
            <person name="Dalin E."/>
            <person name="Tice H."/>
            <person name="Pitluck S."/>
            <person name="Sims D.R."/>
            <person name="Brettin T."/>
            <person name="Bruce D."/>
            <person name="Han C."/>
            <person name="Tapia R."/>
            <person name="Brainard J."/>
            <person name="Schmutz J."/>
            <person name="Larimer F."/>
            <person name="Land M."/>
            <person name="Hauser L."/>
            <person name="Kyrpides N."/>
            <person name="Mikhailova N."/>
            <person name="Brettar I."/>
            <person name="Klappenbach J."/>
            <person name="Konstantinidis K."/>
            <person name="Rodrigues J."/>
            <person name="Tiedje J."/>
            <person name="Richardson P."/>
        </authorList>
    </citation>
    <scope>NUCLEOTIDE SEQUENCE [LARGE SCALE GENOMIC DNA]</scope>
    <source>
        <strain>OS155 / ATCC BAA-1091</strain>
    </source>
</reference>
<name>RL2_SHEB5</name>
<sequence length="274" mass="29897">MAVIKCKPTSPGRRHVVKVVNTDLHKGKPFAGLLAKKSKSGGRNNTGRITVRHVGGGHKQHYRLIDFKRDKDGIPAKIERLEYDPNRTANIALVLYADGERRYILAAKGMQAGDKIQSGVAAEIKTGNAMPLRNIPVGSVVHAVEMKPGKGAQIARSAGAYVQVVARDGAYATLRLRSGEMRKVPVDCRATFGEVGNAEHMLRQLGKAGAKRWRGIRPTVRGVAMNPVDHPHGGGEGRTSGGRHPVTPWGVPTKGYKTRSNKRTDKYIVRRRNK</sequence>
<dbReference type="EMBL" id="CP000563">
    <property type="protein sequence ID" value="ABN63632.1"/>
    <property type="molecule type" value="Genomic_DNA"/>
</dbReference>
<dbReference type="RefSeq" id="WP_006083597.1">
    <property type="nucleotide sequence ID" value="NC_009052.1"/>
</dbReference>
<dbReference type="SMR" id="A3DA69"/>
<dbReference type="STRING" id="325240.Sbal_4167"/>
<dbReference type="GeneID" id="11770562"/>
<dbReference type="KEGG" id="sbl:Sbal_4167"/>
<dbReference type="HOGENOM" id="CLU_036235_2_1_6"/>
<dbReference type="OrthoDB" id="9778722at2"/>
<dbReference type="Proteomes" id="UP000001557">
    <property type="component" value="Chromosome"/>
</dbReference>
<dbReference type="GO" id="GO:0015934">
    <property type="term" value="C:large ribosomal subunit"/>
    <property type="evidence" value="ECO:0007669"/>
    <property type="project" value="InterPro"/>
</dbReference>
<dbReference type="GO" id="GO:0019843">
    <property type="term" value="F:rRNA binding"/>
    <property type="evidence" value="ECO:0007669"/>
    <property type="project" value="UniProtKB-UniRule"/>
</dbReference>
<dbReference type="GO" id="GO:0003735">
    <property type="term" value="F:structural constituent of ribosome"/>
    <property type="evidence" value="ECO:0007669"/>
    <property type="project" value="InterPro"/>
</dbReference>
<dbReference type="GO" id="GO:0016740">
    <property type="term" value="F:transferase activity"/>
    <property type="evidence" value="ECO:0007669"/>
    <property type="project" value="InterPro"/>
</dbReference>
<dbReference type="GO" id="GO:0002181">
    <property type="term" value="P:cytoplasmic translation"/>
    <property type="evidence" value="ECO:0007669"/>
    <property type="project" value="TreeGrafter"/>
</dbReference>
<dbReference type="FunFam" id="2.30.30.30:FF:000001">
    <property type="entry name" value="50S ribosomal protein L2"/>
    <property type="match status" value="1"/>
</dbReference>
<dbReference type="FunFam" id="2.40.50.140:FF:000003">
    <property type="entry name" value="50S ribosomal protein L2"/>
    <property type="match status" value="1"/>
</dbReference>
<dbReference type="FunFam" id="4.10.950.10:FF:000001">
    <property type="entry name" value="50S ribosomal protein L2"/>
    <property type="match status" value="1"/>
</dbReference>
<dbReference type="Gene3D" id="2.30.30.30">
    <property type="match status" value="1"/>
</dbReference>
<dbReference type="Gene3D" id="2.40.50.140">
    <property type="entry name" value="Nucleic acid-binding proteins"/>
    <property type="match status" value="1"/>
</dbReference>
<dbReference type="Gene3D" id="4.10.950.10">
    <property type="entry name" value="Ribosomal protein L2, domain 3"/>
    <property type="match status" value="1"/>
</dbReference>
<dbReference type="HAMAP" id="MF_01320_B">
    <property type="entry name" value="Ribosomal_uL2_B"/>
    <property type="match status" value="1"/>
</dbReference>
<dbReference type="InterPro" id="IPR012340">
    <property type="entry name" value="NA-bd_OB-fold"/>
</dbReference>
<dbReference type="InterPro" id="IPR014722">
    <property type="entry name" value="Rib_uL2_dom2"/>
</dbReference>
<dbReference type="InterPro" id="IPR002171">
    <property type="entry name" value="Ribosomal_uL2"/>
</dbReference>
<dbReference type="InterPro" id="IPR005880">
    <property type="entry name" value="Ribosomal_uL2_bac/org-type"/>
</dbReference>
<dbReference type="InterPro" id="IPR022669">
    <property type="entry name" value="Ribosomal_uL2_C"/>
</dbReference>
<dbReference type="InterPro" id="IPR022671">
    <property type="entry name" value="Ribosomal_uL2_CS"/>
</dbReference>
<dbReference type="InterPro" id="IPR014726">
    <property type="entry name" value="Ribosomal_uL2_dom3"/>
</dbReference>
<dbReference type="InterPro" id="IPR022666">
    <property type="entry name" value="Ribosomal_uL2_RNA-bd_dom"/>
</dbReference>
<dbReference type="InterPro" id="IPR008991">
    <property type="entry name" value="Translation_prot_SH3-like_sf"/>
</dbReference>
<dbReference type="NCBIfam" id="TIGR01171">
    <property type="entry name" value="rplB_bact"/>
    <property type="match status" value="1"/>
</dbReference>
<dbReference type="PANTHER" id="PTHR13691:SF5">
    <property type="entry name" value="LARGE RIBOSOMAL SUBUNIT PROTEIN UL2M"/>
    <property type="match status" value="1"/>
</dbReference>
<dbReference type="PANTHER" id="PTHR13691">
    <property type="entry name" value="RIBOSOMAL PROTEIN L2"/>
    <property type="match status" value="1"/>
</dbReference>
<dbReference type="Pfam" id="PF00181">
    <property type="entry name" value="Ribosomal_L2"/>
    <property type="match status" value="1"/>
</dbReference>
<dbReference type="Pfam" id="PF03947">
    <property type="entry name" value="Ribosomal_L2_C"/>
    <property type="match status" value="1"/>
</dbReference>
<dbReference type="PIRSF" id="PIRSF002158">
    <property type="entry name" value="Ribosomal_L2"/>
    <property type="match status" value="1"/>
</dbReference>
<dbReference type="SMART" id="SM01383">
    <property type="entry name" value="Ribosomal_L2"/>
    <property type="match status" value="1"/>
</dbReference>
<dbReference type="SMART" id="SM01382">
    <property type="entry name" value="Ribosomal_L2_C"/>
    <property type="match status" value="1"/>
</dbReference>
<dbReference type="SUPFAM" id="SSF50249">
    <property type="entry name" value="Nucleic acid-binding proteins"/>
    <property type="match status" value="1"/>
</dbReference>
<dbReference type="SUPFAM" id="SSF50104">
    <property type="entry name" value="Translation proteins SH3-like domain"/>
    <property type="match status" value="1"/>
</dbReference>
<dbReference type="PROSITE" id="PS00467">
    <property type="entry name" value="RIBOSOMAL_L2"/>
    <property type="match status" value="1"/>
</dbReference>
<accession>A3DA69</accession>
<proteinExistence type="inferred from homology"/>